<dbReference type="EC" id="2.1.1.-" evidence="1"/>
<dbReference type="EC" id="2.1.1.35" evidence="1"/>
<dbReference type="EMBL" id="CP001164">
    <property type="protein sequence ID" value="ACI36341.1"/>
    <property type="molecule type" value="Genomic_DNA"/>
</dbReference>
<dbReference type="RefSeq" id="WP_000187009.1">
    <property type="nucleotide sequence ID" value="NC_011353.1"/>
</dbReference>
<dbReference type="SMR" id="B5Z069"/>
<dbReference type="KEGG" id="ecf:ECH74115_5428"/>
<dbReference type="HOGENOM" id="CLU_043022_0_0_6"/>
<dbReference type="GO" id="GO:0005829">
    <property type="term" value="C:cytosol"/>
    <property type="evidence" value="ECO:0007669"/>
    <property type="project" value="TreeGrafter"/>
</dbReference>
<dbReference type="GO" id="GO:0019843">
    <property type="term" value="F:rRNA binding"/>
    <property type="evidence" value="ECO:0007669"/>
    <property type="project" value="TreeGrafter"/>
</dbReference>
<dbReference type="GO" id="GO:0030697">
    <property type="term" value="F:tRNA (uracil(54)-C5)-methyltransferase activity, S-adenosyl methionine-dependent"/>
    <property type="evidence" value="ECO:0007669"/>
    <property type="project" value="UniProtKB-UniRule"/>
</dbReference>
<dbReference type="GO" id="GO:0000049">
    <property type="term" value="F:tRNA binding"/>
    <property type="evidence" value="ECO:0007669"/>
    <property type="project" value="TreeGrafter"/>
</dbReference>
<dbReference type="GO" id="GO:0030488">
    <property type="term" value="P:tRNA methylation"/>
    <property type="evidence" value="ECO:0007669"/>
    <property type="project" value="UniProtKB-UniRule"/>
</dbReference>
<dbReference type="CDD" id="cd02440">
    <property type="entry name" value="AdoMet_MTases"/>
    <property type="match status" value="1"/>
</dbReference>
<dbReference type="FunFam" id="2.40.50.1070:FF:000001">
    <property type="entry name" value="tRNA/tmRNA (uracil-C(5))-methyltransferase"/>
    <property type="match status" value="1"/>
</dbReference>
<dbReference type="FunFam" id="3.40.50.150:FF:000012">
    <property type="entry name" value="tRNA/tmRNA (uracil-C(5))-methyltransferase"/>
    <property type="match status" value="1"/>
</dbReference>
<dbReference type="Gene3D" id="2.40.50.1070">
    <property type="match status" value="1"/>
</dbReference>
<dbReference type="Gene3D" id="3.40.50.150">
    <property type="entry name" value="Vaccinia Virus protein VP39"/>
    <property type="match status" value="1"/>
</dbReference>
<dbReference type="HAMAP" id="MF_01011">
    <property type="entry name" value="RNA_methyltr_TrmA"/>
    <property type="match status" value="1"/>
</dbReference>
<dbReference type="InterPro" id="IPR030390">
    <property type="entry name" value="MeTrfase_TrmA_AS"/>
</dbReference>
<dbReference type="InterPro" id="IPR030391">
    <property type="entry name" value="MeTrfase_TrmA_CS"/>
</dbReference>
<dbReference type="InterPro" id="IPR029063">
    <property type="entry name" value="SAM-dependent_MTases_sf"/>
</dbReference>
<dbReference type="InterPro" id="IPR011869">
    <property type="entry name" value="TrmA_MeTrfase"/>
</dbReference>
<dbReference type="InterPro" id="IPR010280">
    <property type="entry name" value="U5_MeTrfase_fam"/>
</dbReference>
<dbReference type="NCBIfam" id="TIGR02143">
    <property type="entry name" value="trmA_only"/>
    <property type="match status" value="1"/>
</dbReference>
<dbReference type="PANTHER" id="PTHR47790">
    <property type="entry name" value="TRNA/TMRNA (URACIL-C(5))-METHYLTRANSFERASE"/>
    <property type="match status" value="1"/>
</dbReference>
<dbReference type="PANTHER" id="PTHR47790:SF2">
    <property type="entry name" value="TRNA_TMRNA (URACIL-C(5))-METHYLTRANSFERASE"/>
    <property type="match status" value="1"/>
</dbReference>
<dbReference type="Pfam" id="PF05958">
    <property type="entry name" value="tRNA_U5-meth_tr"/>
    <property type="match status" value="1"/>
</dbReference>
<dbReference type="SUPFAM" id="SSF53335">
    <property type="entry name" value="S-adenosyl-L-methionine-dependent methyltransferases"/>
    <property type="match status" value="1"/>
</dbReference>
<dbReference type="PROSITE" id="PS51687">
    <property type="entry name" value="SAM_MT_RNA_M5U"/>
    <property type="match status" value="1"/>
</dbReference>
<dbReference type="PROSITE" id="PS01230">
    <property type="entry name" value="TRMA_1"/>
    <property type="match status" value="1"/>
</dbReference>
<dbReference type="PROSITE" id="PS01231">
    <property type="entry name" value="TRMA_2"/>
    <property type="match status" value="1"/>
</dbReference>
<evidence type="ECO:0000255" key="1">
    <source>
        <dbReference type="HAMAP-Rule" id="MF_01011"/>
    </source>
</evidence>
<gene>
    <name evidence="1" type="primary">trmA</name>
    <name type="ordered locus">ECH74115_5428</name>
</gene>
<feature type="chain" id="PRO_1000198541" description="tRNA/tmRNA (uracil-C(5))-methyltransferase">
    <location>
        <begin position="1"/>
        <end position="366"/>
    </location>
</feature>
<feature type="active site" description="Nucleophile" evidence="1">
    <location>
        <position position="324"/>
    </location>
</feature>
<feature type="active site" description="Proton acceptor" evidence="1">
    <location>
        <position position="358"/>
    </location>
</feature>
<feature type="binding site" evidence="1">
    <location>
        <position position="190"/>
    </location>
    <ligand>
        <name>S-adenosyl-L-methionine</name>
        <dbReference type="ChEBI" id="CHEBI:59789"/>
    </ligand>
</feature>
<feature type="binding site" evidence="1">
    <location>
        <position position="218"/>
    </location>
    <ligand>
        <name>S-adenosyl-L-methionine</name>
        <dbReference type="ChEBI" id="CHEBI:59789"/>
    </ligand>
</feature>
<feature type="binding site" evidence="1">
    <location>
        <position position="223"/>
    </location>
    <ligand>
        <name>S-adenosyl-L-methionine</name>
        <dbReference type="ChEBI" id="CHEBI:59789"/>
    </ligand>
</feature>
<feature type="binding site" evidence="1">
    <location>
        <position position="239"/>
    </location>
    <ligand>
        <name>S-adenosyl-L-methionine</name>
        <dbReference type="ChEBI" id="CHEBI:59789"/>
    </ligand>
</feature>
<feature type="binding site" evidence="1">
    <location>
        <position position="299"/>
    </location>
    <ligand>
        <name>S-adenosyl-L-methionine</name>
        <dbReference type="ChEBI" id="CHEBI:59789"/>
    </ligand>
</feature>
<organism>
    <name type="scientific">Escherichia coli O157:H7 (strain EC4115 / EHEC)</name>
    <dbReference type="NCBI Taxonomy" id="444450"/>
    <lineage>
        <taxon>Bacteria</taxon>
        <taxon>Pseudomonadati</taxon>
        <taxon>Pseudomonadota</taxon>
        <taxon>Gammaproteobacteria</taxon>
        <taxon>Enterobacterales</taxon>
        <taxon>Enterobacteriaceae</taxon>
        <taxon>Escherichia</taxon>
    </lineage>
</organism>
<accession>B5Z069</accession>
<proteinExistence type="inferred from homology"/>
<sequence>MTPEHLPTEQYEAQLAEKVVRLQSMMAPFSDLVPEVFRSPVSHYRMRAEFRIWHDGDDLYHIIFDQQTKSRIRVDSFPAASELINQLMTAMIAGVRNNPVLRHKLFQIDYLTTLSNQAVVSLLYHKKLDDEWRQEAEALRDALRAQNLNVHLIGRATKTKIALDQDYIDERLPVAGKEMIYRQVENSFTQPNAAMNIQMLEWALDVTKGSKGDLLELYCGNGNFSLALARNFDRVLATEIAKPSVAAAQYNIAANHIDNVQIIRMAAEEFTQAMNGVREFNRLQGIDLKSYQCETIFVDPPRSGLDSETEKMVQAYPRILYISCNPETLCKNLETLSQTHKVERLALFDQFPYTHHMECSVLLTAK</sequence>
<name>TRMA_ECO5E</name>
<protein>
    <recommendedName>
        <fullName evidence="1">tRNA/tmRNA (uracil-C(5))-methyltransferase</fullName>
        <ecNumber evidence="1">2.1.1.-</ecNumber>
        <ecNumber evidence="1">2.1.1.35</ecNumber>
    </recommendedName>
    <alternativeName>
        <fullName evidence="1">tRNA (uracil(54)-C(5))-methyltransferase</fullName>
    </alternativeName>
    <alternativeName>
        <fullName evidence="1">tRNA(m5U54)-methyltransferase</fullName>
        <shortName evidence="1">RUMT</shortName>
    </alternativeName>
    <alternativeName>
        <fullName evidence="1">tmRNA (uracil(341)-C(5))-methyltransferase</fullName>
    </alternativeName>
</protein>
<comment type="function">
    <text evidence="1">Dual-specificity methyltransferase that catalyzes the formation of 5-methyluridine at position 54 (m5U54) in all tRNAs, and that of position 341 (m5U341) in tmRNA (transfer-mRNA).</text>
</comment>
<comment type="catalytic activity">
    <reaction evidence="1">
        <text>uridine(54) in tRNA + S-adenosyl-L-methionine = 5-methyluridine(54) in tRNA + S-adenosyl-L-homocysteine + H(+)</text>
        <dbReference type="Rhea" id="RHEA:42712"/>
        <dbReference type="Rhea" id="RHEA-COMP:10167"/>
        <dbReference type="Rhea" id="RHEA-COMP:10193"/>
        <dbReference type="ChEBI" id="CHEBI:15378"/>
        <dbReference type="ChEBI" id="CHEBI:57856"/>
        <dbReference type="ChEBI" id="CHEBI:59789"/>
        <dbReference type="ChEBI" id="CHEBI:65315"/>
        <dbReference type="ChEBI" id="CHEBI:74447"/>
        <dbReference type="EC" id="2.1.1.35"/>
    </reaction>
</comment>
<comment type="catalytic activity">
    <reaction evidence="1">
        <text>uridine(341) in tmRNA + S-adenosyl-L-methionine = 5-methyluridine(341) in tmRNA + S-adenosyl-L-homocysteine + H(+)</text>
        <dbReference type="Rhea" id="RHEA:43612"/>
        <dbReference type="Rhea" id="RHEA-COMP:10630"/>
        <dbReference type="Rhea" id="RHEA-COMP:10631"/>
        <dbReference type="ChEBI" id="CHEBI:15378"/>
        <dbReference type="ChEBI" id="CHEBI:57856"/>
        <dbReference type="ChEBI" id="CHEBI:59789"/>
        <dbReference type="ChEBI" id="CHEBI:65315"/>
        <dbReference type="ChEBI" id="CHEBI:74447"/>
    </reaction>
</comment>
<comment type="similarity">
    <text evidence="1">Belongs to the class I-like SAM-binding methyltransferase superfamily. RNA M5U methyltransferase family. TrmA subfamily.</text>
</comment>
<keyword id="KW-0489">Methyltransferase</keyword>
<keyword id="KW-0949">S-adenosyl-L-methionine</keyword>
<keyword id="KW-0808">Transferase</keyword>
<keyword id="KW-0819">tRNA processing</keyword>
<reference key="1">
    <citation type="journal article" date="2011" name="Proc. Natl. Acad. Sci. U.S.A.">
        <title>Genomic anatomy of Escherichia coli O157:H7 outbreaks.</title>
        <authorList>
            <person name="Eppinger M."/>
            <person name="Mammel M.K."/>
            <person name="Leclerc J.E."/>
            <person name="Ravel J."/>
            <person name="Cebula T.A."/>
        </authorList>
    </citation>
    <scope>NUCLEOTIDE SEQUENCE [LARGE SCALE GENOMIC DNA]</scope>
    <source>
        <strain>EC4115 / EHEC</strain>
    </source>
</reference>